<name>HXD3_MOUSE</name>
<accession>P09027</accession>
<accession>Q3UUD3</accession>
<reference key="1">
    <citation type="journal article" date="1994" name="Biochim. Biophys. Acta">
        <title>The nucleotide sequence of the murine Hox-D3 (Hox-4.1) gene reveals extensive identity with the human protein.</title>
        <authorList>
            <person name="Brown W.M."/>
            <person name="Zhou L."/>
            <person name="Taylor G.R."/>
        </authorList>
    </citation>
    <scope>NUCLEOTIDE SEQUENCE [GENOMIC DNA]</scope>
</reference>
<reference key="2">
    <citation type="journal article" date="1995" name="DNA Cell Biol.">
        <title>Analysis of the Hoxd-3 gene: structure and localization of its sense and natural antisense transcripts.</title>
        <authorList>
            <person name="Bedford M."/>
            <person name="Orr-Urtreger A."/>
            <person name="Arman E."/>
            <person name="Lonai P."/>
        </authorList>
    </citation>
    <scope>NUCLEOTIDE SEQUENCE [MRNA]</scope>
</reference>
<reference key="3">
    <citation type="journal article" date="1996" name="Proc. Natl. Acad. Sci. U.S.A.">
        <title>Sequence and expression of the murine Hoxd-3 homeobox gene.</title>
        <authorList>
            <person name="Tan D.-P."/>
            <person name="Shao X."/>
            <person name="Pu L."/>
            <person name="Guo V."/>
            <person name="Nirenberg M."/>
        </authorList>
    </citation>
    <scope>NUCLEOTIDE SEQUENCE [GENOMIC DNA / MRNA]</scope>
    <scope>DEVELOPMENTAL STAGE</scope>
    <scope>TISSUE SPECIFICITY</scope>
    <source>
        <strain>ICR X Swiss Webster</strain>
        <tissue>Liver</tissue>
    </source>
</reference>
<reference key="4">
    <citation type="journal article" date="2005" name="Science">
        <title>The transcriptional landscape of the mammalian genome.</title>
        <authorList>
            <person name="Carninci P."/>
            <person name="Kasukawa T."/>
            <person name="Katayama S."/>
            <person name="Gough J."/>
            <person name="Frith M.C."/>
            <person name="Maeda N."/>
            <person name="Oyama R."/>
            <person name="Ravasi T."/>
            <person name="Lenhard B."/>
            <person name="Wells C."/>
            <person name="Kodzius R."/>
            <person name="Shimokawa K."/>
            <person name="Bajic V.B."/>
            <person name="Brenner S.E."/>
            <person name="Batalov S."/>
            <person name="Forrest A.R."/>
            <person name="Zavolan M."/>
            <person name="Davis M.J."/>
            <person name="Wilming L.G."/>
            <person name="Aidinis V."/>
            <person name="Allen J.E."/>
            <person name="Ambesi-Impiombato A."/>
            <person name="Apweiler R."/>
            <person name="Aturaliya R.N."/>
            <person name="Bailey T.L."/>
            <person name="Bansal M."/>
            <person name="Baxter L."/>
            <person name="Beisel K.W."/>
            <person name="Bersano T."/>
            <person name="Bono H."/>
            <person name="Chalk A.M."/>
            <person name="Chiu K.P."/>
            <person name="Choudhary V."/>
            <person name="Christoffels A."/>
            <person name="Clutterbuck D.R."/>
            <person name="Crowe M.L."/>
            <person name="Dalla E."/>
            <person name="Dalrymple B.P."/>
            <person name="de Bono B."/>
            <person name="Della Gatta G."/>
            <person name="di Bernardo D."/>
            <person name="Down T."/>
            <person name="Engstrom P."/>
            <person name="Fagiolini M."/>
            <person name="Faulkner G."/>
            <person name="Fletcher C.F."/>
            <person name="Fukushima T."/>
            <person name="Furuno M."/>
            <person name="Futaki S."/>
            <person name="Gariboldi M."/>
            <person name="Georgii-Hemming P."/>
            <person name="Gingeras T.R."/>
            <person name="Gojobori T."/>
            <person name="Green R.E."/>
            <person name="Gustincich S."/>
            <person name="Harbers M."/>
            <person name="Hayashi Y."/>
            <person name="Hensch T.K."/>
            <person name="Hirokawa N."/>
            <person name="Hill D."/>
            <person name="Huminiecki L."/>
            <person name="Iacono M."/>
            <person name="Ikeo K."/>
            <person name="Iwama A."/>
            <person name="Ishikawa T."/>
            <person name="Jakt M."/>
            <person name="Kanapin A."/>
            <person name="Katoh M."/>
            <person name="Kawasawa Y."/>
            <person name="Kelso J."/>
            <person name="Kitamura H."/>
            <person name="Kitano H."/>
            <person name="Kollias G."/>
            <person name="Krishnan S.P."/>
            <person name="Kruger A."/>
            <person name="Kummerfeld S.K."/>
            <person name="Kurochkin I.V."/>
            <person name="Lareau L.F."/>
            <person name="Lazarevic D."/>
            <person name="Lipovich L."/>
            <person name="Liu J."/>
            <person name="Liuni S."/>
            <person name="McWilliam S."/>
            <person name="Madan Babu M."/>
            <person name="Madera M."/>
            <person name="Marchionni L."/>
            <person name="Matsuda H."/>
            <person name="Matsuzawa S."/>
            <person name="Miki H."/>
            <person name="Mignone F."/>
            <person name="Miyake S."/>
            <person name="Morris K."/>
            <person name="Mottagui-Tabar S."/>
            <person name="Mulder N."/>
            <person name="Nakano N."/>
            <person name="Nakauchi H."/>
            <person name="Ng P."/>
            <person name="Nilsson R."/>
            <person name="Nishiguchi S."/>
            <person name="Nishikawa S."/>
            <person name="Nori F."/>
            <person name="Ohara O."/>
            <person name="Okazaki Y."/>
            <person name="Orlando V."/>
            <person name="Pang K.C."/>
            <person name="Pavan W.J."/>
            <person name="Pavesi G."/>
            <person name="Pesole G."/>
            <person name="Petrovsky N."/>
            <person name="Piazza S."/>
            <person name="Reed J."/>
            <person name="Reid J.F."/>
            <person name="Ring B.Z."/>
            <person name="Ringwald M."/>
            <person name="Rost B."/>
            <person name="Ruan Y."/>
            <person name="Salzberg S.L."/>
            <person name="Sandelin A."/>
            <person name="Schneider C."/>
            <person name="Schoenbach C."/>
            <person name="Sekiguchi K."/>
            <person name="Semple C.A."/>
            <person name="Seno S."/>
            <person name="Sessa L."/>
            <person name="Sheng Y."/>
            <person name="Shibata Y."/>
            <person name="Shimada H."/>
            <person name="Shimada K."/>
            <person name="Silva D."/>
            <person name="Sinclair B."/>
            <person name="Sperling S."/>
            <person name="Stupka E."/>
            <person name="Sugiura K."/>
            <person name="Sultana R."/>
            <person name="Takenaka Y."/>
            <person name="Taki K."/>
            <person name="Tammoja K."/>
            <person name="Tan S.L."/>
            <person name="Tang S."/>
            <person name="Taylor M.S."/>
            <person name="Tegner J."/>
            <person name="Teichmann S.A."/>
            <person name="Ueda H.R."/>
            <person name="van Nimwegen E."/>
            <person name="Verardo R."/>
            <person name="Wei C.L."/>
            <person name="Yagi K."/>
            <person name="Yamanishi H."/>
            <person name="Zabarovsky E."/>
            <person name="Zhu S."/>
            <person name="Zimmer A."/>
            <person name="Hide W."/>
            <person name="Bult C."/>
            <person name="Grimmond S.M."/>
            <person name="Teasdale R.D."/>
            <person name="Liu E.T."/>
            <person name="Brusic V."/>
            <person name="Quackenbush J."/>
            <person name="Wahlestedt C."/>
            <person name="Mattick J.S."/>
            <person name="Hume D.A."/>
            <person name="Kai C."/>
            <person name="Sasaki D."/>
            <person name="Tomaru Y."/>
            <person name="Fukuda S."/>
            <person name="Kanamori-Katayama M."/>
            <person name="Suzuki M."/>
            <person name="Aoki J."/>
            <person name="Arakawa T."/>
            <person name="Iida J."/>
            <person name="Imamura K."/>
            <person name="Itoh M."/>
            <person name="Kato T."/>
            <person name="Kawaji H."/>
            <person name="Kawagashira N."/>
            <person name="Kawashima T."/>
            <person name="Kojima M."/>
            <person name="Kondo S."/>
            <person name="Konno H."/>
            <person name="Nakano K."/>
            <person name="Ninomiya N."/>
            <person name="Nishio T."/>
            <person name="Okada M."/>
            <person name="Plessy C."/>
            <person name="Shibata K."/>
            <person name="Shiraki T."/>
            <person name="Suzuki S."/>
            <person name="Tagami M."/>
            <person name="Waki K."/>
            <person name="Watahiki A."/>
            <person name="Okamura-Oho Y."/>
            <person name="Suzuki H."/>
            <person name="Kawai J."/>
            <person name="Hayashizaki Y."/>
        </authorList>
    </citation>
    <scope>NUCLEOTIDE SEQUENCE [LARGE SCALE MRNA]</scope>
    <source>
        <strain>C57BL/6J</strain>
        <tissue>Spinal cord</tissue>
    </source>
</reference>
<reference key="5">
    <citation type="journal article" date="1987" name="DNA">
        <title>New murine homeoboxes: structure, chromosomal assignment, and differential expression in adult erythropoiesis.</title>
        <authorList>
            <person name="Lonai P."/>
            <person name="Arman E."/>
            <person name="Czosnek H."/>
            <person name="Ruddle F.H."/>
            <person name="Blatt C."/>
        </authorList>
    </citation>
    <scope>NUCLEOTIDE SEQUENCE [GENOMIC DNA] OF 182-303</scope>
</reference>
<reference key="6">
    <citation type="submission" date="1987-12" db="EMBL/GenBank/DDBJ databases">
        <authorList>
            <person name="Lonai P."/>
        </authorList>
    </citation>
    <scope>NUCLEOTIDE SEQUENCE [GENOMIC DNA] OF 179-335</scope>
</reference>
<protein>
    <recommendedName>
        <fullName>Homeobox protein Hox-D3</fullName>
    </recommendedName>
    <alternativeName>
        <fullName>Homeobox protein Hox-4.1</fullName>
    </alternativeName>
    <alternativeName>
        <fullName>Homeobox protein MH-19</fullName>
    </alternativeName>
</protein>
<evidence type="ECO:0000255" key="1">
    <source>
        <dbReference type="PROSITE-ProRule" id="PRU00108"/>
    </source>
</evidence>
<evidence type="ECO:0000256" key="2">
    <source>
        <dbReference type="SAM" id="MobiDB-lite"/>
    </source>
</evidence>
<evidence type="ECO:0000269" key="3">
    <source>
    </source>
</evidence>
<evidence type="ECO:0000305" key="4"/>
<comment type="function">
    <text>Sequence-specific transcription factor which is part of a developmental regulatory system that provides cells with specific positional identities on the anterior-posterior axis.</text>
</comment>
<comment type="subcellular location">
    <subcellularLocation>
        <location>Nucleus</location>
    </subcellularLocation>
</comment>
<comment type="tissue specificity">
    <text evidence="3">Detected in adult kidney, but not in other adult tissues tested.</text>
</comment>
<comment type="developmental stage">
    <text evidence="3">Detected in 12-, 14-, and 17-day-old mouse embryos in the posterior half of the myelencephalon, spinal cord, dorsal root ganglia, first cervical vertebra, thyroid gland, kidney tubules, esophagus, stomach, and intestines.</text>
</comment>
<comment type="similarity">
    <text evidence="4">Belongs to the Antp homeobox family.</text>
</comment>
<comment type="caution">
    <text evidence="4">It is uncertain whether Met-1 or Met-17 is the initiator.</text>
</comment>
<comment type="sequence caution" evidence="4">
    <conflict type="erroneous initiation">
        <sequence resource="EMBL-CDS" id="AAB60683"/>
    </conflict>
</comment>
<comment type="sequence caution" evidence="4">
    <conflict type="erroneous initiation">
        <sequence resource="EMBL-CDS" id="AAC52779"/>
    </conflict>
</comment>
<comment type="sequence caution" evidence="4">
    <conflict type="erroneous initiation">
        <sequence resource="EMBL-CDS" id="AAC52780"/>
    </conflict>
</comment>
<comment type="sequence caution" evidence="4">
    <conflict type="erroneous initiation">
        <sequence resource="EMBL-CDS" id="BAE23694"/>
    </conflict>
</comment>
<comment type="sequence caution" evidence="4">
    <conflict type="frameshift">
        <sequence resource="EMBL-CDS" id="CAA51975"/>
    </conflict>
</comment>
<feature type="chain" id="PRO_0000200205" description="Homeobox protein Hox-D3">
    <location>
        <begin position="1"/>
        <end position="433"/>
    </location>
</feature>
<feature type="DNA-binding region" description="Homeobox" evidence="1">
    <location>
        <begin position="195"/>
        <end position="254"/>
    </location>
</feature>
<feature type="region of interest" description="Disordered" evidence="2">
    <location>
        <begin position="44"/>
        <end position="198"/>
    </location>
</feature>
<feature type="region of interest" description="Disordered" evidence="2">
    <location>
        <begin position="258"/>
        <end position="280"/>
    </location>
</feature>
<feature type="region of interest" description="Disordered" evidence="2">
    <location>
        <begin position="401"/>
        <end position="433"/>
    </location>
</feature>
<feature type="short sequence motif" description="Antp-type hexapeptide">
    <location>
        <begin position="161"/>
        <end position="166"/>
    </location>
</feature>
<feature type="compositionally biased region" description="Polar residues" evidence="2">
    <location>
        <begin position="58"/>
        <end position="74"/>
    </location>
</feature>
<feature type="compositionally biased region" description="Gly residues" evidence="2">
    <location>
        <begin position="97"/>
        <end position="106"/>
    </location>
</feature>
<feature type="compositionally biased region" description="Pro residues" evidence="2">
    <location>
        <begin position="116"/>
        <end position="132"/>
    </location>
</feature>
<feature type="compositionally biased region" description="Low complexity" evidence="2">
    <location>
        <begin position="146"/>
        <end position="159"/>
    </location>
</feature>
<feature type="compositionally biased region" description="Polar residues" evidence="2">
    <location>
        <begin position="171"/>
        <end position="183"/>
    </location>
</feature>
<feature type="sequence conflict" description="In Ref. 5 and 6; AAA37846." evidence="4" ref="5 6">
    <original>D</original>
    <variation>N</variation>
    <location>
        <position position="187"/>
    </location>
</feature>
<feature type="sequence conflict" description="In Ref. 5 and 6; AAA37846." evidence="4" ref="5 6">
    <original>G</original>
    <variation>D</variation>
    <location>
        <position position="192"/>
    </location>
</feature>
<feature type="sequence conflict" description="In Ref. 5 and 6; AAA37846." evidence="4" ref="5 6">
    <original>A</original>
    <variation>T</variation>
    <location>
        <position position="201"/>
    </location>
</feature>
<feature type="sequence conflict" description="In Ref. 2; CAA51975." evidence="4" ref="2">
    <location>
        <position position="289"/>
    </location>
</feature>
<proteinExistence type="evidence at transcript level"/>
<organism>
    <name type="scientific">Mus musculus</name>
    <name type="common">Mouse</name>
    <dbReference type="NCBI Taxonomy" id="10090"/>
    <lineage>
        <taxon>Eukaryota</taxon>
        <taxon>Metazoa</taxon>
        <taxon>Chordata</taxon>
        <taxon>Craniata</taxon>
        <taxon>Vertebrata</taxon>
        <taxon>Euteleostomi</taxon>
        <taxon>Mammalia</taxon>
        <taxon>Eutheria</taxon>
        <taxon>Euarchontoglires</taxon>
        <taxon>Glires</taxon>
        <taxon>Rodentia</taxon>
        <taxon>Myomorpha</taxon>
        <taxon>Muroidea</taxon>
        <taxon>Muridae</taxon>
        <taxon>Murinae</taxon>
        <taxon>Mus</taxon>
        <taxon>Mus</taxon>
    </lineage>
</organism>
<keyword id="KW-0217">Developmental protein</keyword>
<keyword id="KW-0238">DNA-binding</keyword>
<keyword id="KW-0371">Homeobox</keyword>
<keyword id="KW-0539">Nucleus</keyword>
<keyword id="KW-1185">Reference proteome</keyword>
<keyword id="KW-0804">Transcription</keyword>
<keyword id="KW-0805">Transcription regulation</keyword>
<dbReference type="EMBL" id="U03485">
    <property type="protein sequence ID" value="AAB60683.1"/>
    <property type="status" value="ALT_INIT"/>
    <property type="molecule type" value="Genomic_DNA"/>
</dbReference>
<dbReference type="EMBL" id="U03496">
    <property type="protein sequence ID" value="AAB60683.1"/>
    <property type="status" value="JOINED"/>
    <property type="molecule type" value="Genomic_DNA"/>
</dbReference>
<dbReference type="EMBL" id="X73573">
    <property type="protein sequence ID" value="CAA51975.1"/>
    <property type="status" value="ALT_SEQ"/>
    <property type="molecule type" value="mRNA"/>
</dbReference>
<dbReference type="EMBL" id="L24363">
    <property type="protein sequence ID" value="AAA37855.1"/>
    <property type="molecule type" value="Genomic_DNA"/>
</dbReference>
<dbReference type="EMBL" id="U56400">
    <property type="protein sequence ID" value="AAC52779.1"/>
    <property type="status" value="ALT_INIT"/>
    <property type="molecule type" value="mRNA"/>
</dbReference>
<dbReference type="EMBL" id="U56401">
    <property type="protein sequence ID" value="AAC52780.1"/>
    <property type="status" value="ALT_INIT"/>
    <property type="molecule type" value="Genomic_DNA"/>
</dbReference>
<dbReference type="EMBL" id="AK138525">
    <property type="protein sequence ID" value="BAE23694.1"/>
    <property type="status" value="ALT_INIT"/>
    <property type="molecule type" value="mRNA"/>
</dbReference>
<dbReference type="EMBL" id="M18169">
    <property type="protein sequence ID" value="AAA37846.1"/>
    <property type="status" value="ALT_SEQ"/>
    <property type="molecule type" value="Genomic_DNA"/>
</dbReference>
<dbReference type="CCDS" id="CCDS38149.1"/>
<dbReference type="PIR" id="D29585">
    <property type="entry name" value="D29585"/>
</dbReference>
<dbReference type="PIR" id="S34164">
    <property type="entry name" value="S34164"/>
</dbReference>
<dbReference type="PIR" id="S47539">
    <property type="entry name" value="S47539"/>
</dbReference>
<dbReference type="RefSeq" id="NP_034598.2">
    <property type="nucleotide sequence ID" value="NM_010468.2"/>
</dbReference>
<dbReference type="SMR" id="P09027"/>
<dbReference type="BioGRID" id="200396">
    <property type="interactions" value="4"/>
</dbReference>
<dbReference type="FunCoup" id="P09027">
    <property type="interactions" value="1012"/>
</dbReference>
<dbReference type="IntAct" id="P09027">
    <property type="interactions" value="4"/>
</dbReference>
<dbReference type="STRING" id="10090.ENSMUSP00000107614"/>
<dbReference type="PhosphoSitePlus" id="P09027"/>
<dbReference type="PaxDb" id="10090-ENSMUSP00000107614"/>
<dbReference type="ProteomicsDB" id="266935"/>
<dbReference type="Pumba" id="P09027"/>
<dbReference type="Antibodypedia" id="19525">
    <property type="antibodies" value="206 antibodies from 24 providers"/>
</dbReference>
<dbReference type="DNASU" id="15434"/>
<dbReference type="Ensembl" id="ENSMUST00000047830.8">
    <property type="protein sequence ID" value="ENSMUSP00000044809.7"/>
    <property type="gene ID" value="ENSMUSG00000079277.10"/>
</dbReference>
<dbReference type="Ensembl" id="ENSMUST00000111982.8">
    <property type="protein sequence ID" value="ENSMUSP00000107613.2"/>
    <property type="gene ID" value="ENSMUSG00000079277.10"/>
</dbReference>
<dbReference type="Ensembl" id="ENSMUST00000111983.9">
    <property type="protein sequence ID" value="ENSMUSP00000107614.3"/>
    <property type="gene ID" value="ENSMUSG00000079277.10"/>
</dbReference>
<dbReference type="GeneID" id="15434"/>
<dbReference type="KEGG" id="mmu:15434"/>
<dbReference type="UCSC" id="uc008kee.1">
    <property type="organism name" value="mouse"/>
</dbReference>
<dbReference type="AGR" id="MGI:96207"/>
<dbReference type="CTD" id="3232"/>
<dbReference type="MGI" id="MGI:96207">
    <property type="gene designation" value="Hoxd3"/>
</dbReference>
<dbReference type="VEuPathDB" id="HostDB:ENSMUSG00000079277"/>
<dbReference type="eggNOG" id="KOG0489">
    <property type="taxonomic scope" value="Eukaryota"/>
</dbReference>
<dbReference type="GeneTree" id="ENSGT00940000160027"/>
<dbReference type="HOGENOM" id="CLU_051508_1_0_1"/>
<dbReference type="InParanoid" id="P09027"/>
<dbReference type="OMA" id="YPYGAAH"/>
<dbReference type="OrthoDB" id="6159439at2759"/>
<dbReference type="PhylomeDB" id="P09027"/>
<dbReference type="TreeFam" id="TF315938"/>
<dbReference type="BioGRID-ORCS" id="15434">
    <property type="hits" value="4 hits in 79 CRISPR screens"/>
</dbReference>
<dbReference type="ChiTaRS" id="Hoxd3">
    <property type="organism name" value="mouse"/>
</dbReference>
<dbReference type="PRO" id="PR:P09027"/>
<dbReference type="Proteomes" id="UP000000589">
    <property type="component" value="Chromosome 2"/>
</dbReference>
<dbReference type="RNAct" id="P09027">
    <property type="molecule type" value="protein"/>
</dbReference>
<dbReference type="Bgee" id="ENSMUSG00000079277">
    <property type="expression patterns" value="Expressed in ureteric bud and 100 other cell types or tissues"/>
</dbReference>
<dbReference type="ExpressionAtlas" id="P09027">
    <property type="expression patterns" value="baseline and differential"/>
</dbReference>
<dbReference type="GO" id="GO:0016235">
    <property type="term" value="C:aggresome"/>
    <property type="evidence" value="ECO:0007669"/>
    <property type="project" value="Ensembl"/>
</dbReference>
<dbReference type="GO" id="GO:0016604">
    <property type="term" value="C:nuclear body"/>
    <property type="evidence" value="ECO:0007669"/>
    <property type="project" value="Ensembl"/>
</dbReference>
<dbReference type="GO" id="GO:0005654">
    <property type="term" value="C:nucleoplasm"/>
    <property type="evidence" value="ECO:0000304"/>
    <property type="project" value="Reactome"/>
</dbReference>
<dbReference type="GO" id="GO:0001228">
    <property type="term" value="F:DNA-binding transcription activator activity, RNA polymerase II-specific"/>
    <property type="evidence" value="ECO:0007669"/>
    <property type="project" value="Ensembl"/>
</dbReference>
<dbReference type="GO" id="GO:0000977">
    <property type="term" value="F:RNA polymerase II transcription regulatory region sequence-specific DNA binding"/>
    <property type="evidence" value="ECO:0007669"/>
    <property type="project" value="Ensembl"/>
</dbReference>
<dbReference type="GO" id="GO:0009952">
    <property type="term" value="P:anterior/posterior pattern specification"/>
    <property type="evidence" value="ECO:0000315"/>
    <property type="project" value="MGI"/>
</dbReference>
<dbReference type="GO" id="GO:0051216">
    <property type="term" value="P:cartilage development"/>
    <property type="evidence" value="ECO:0000316"/>
    <property type="project" value="MGI"/>
</dbReference>
<dbReference type="GO" id="GO:0007160">
    <property type="term" value="P:cell-matrix adhesion"/>
    <property type="evidence" value="ECO:0007669"/>
    <property type="project" value="Ensembl"/>
</dbReference>
<dbReference type="GO" id="GO:0006351">
    <property type="term" value="P:DNA-templated transcription"/>
    <property type="evidence" value="ECO:0007669"/>
    <property type="project" value="Ensembl"/>
</dbReference>
<dbReference type="GO" id="GO:0048704">
    <property type="term" value="P:embryonic skeletal system morphogenesis"/>
    <property type="evidence" value="ECO:0000315"/>
    <property type="project" value="MGI"/>
</dbReference>
<dbReference type="GO" id="GO:0021615">
    <property type="term" value="P:glossopharyngeal nerve morphogenesis"/>
    <property type="evidence" value="ECO:0000316"/>
    <property type="project" value="MGI"/>
</dbReference>
<dbReference type="GO" id="GO:0007219">
    <property type="term" value="P:Notch signaling pathway"/>
    <property type="evidence" value="ECO:0007669"/>
    <property type="project" value="Ensembl"/>
</dbReference>
<dbReference type="GO" id="GO:0010628">
    <property type="term" value="P:positive regulation of gene expression"/>
    <property type="evidence" value="ECO:0007669"/>
    <property type="project" value="Ensembl"/>
</dbReference>
<dbReference type="GO" id="GO:0045666">
    <property type="term" value="P:positive regulation of neuron differentiation"/>
    <property type="evidence" value="ECO:0000316"/>
    <property type="project" value="MGI"/>
</dbReference>
<dbReference type="GO" id="GO:0030878">
    <property type="term" value="P:thyroid gland development"/>
    <property type="evidence" value="ECO:0000316"/>
    <property type="project" value="MGI"/>
</dbReference>
<dbReference type="CDD" id="cd00086">
    <property type="entry name" value="homeodomain"/>
    <property type="match status" value="1"/>
</dbReference>
<dbReference type="FunFam" id="1.10.10.60:FF:000094">
    <property type="entry name" value="Homeobox protein Hox-A3"/>
    <property type="match status" value="1"/>
</dbReference>
<dbReference type="Gene3D" id="1.10.10.60">
    <property type="entry name" value="Homeodomain-like"/>
    <property type="match status" value="1"/>
</dbReference>
<dbReference type="InterPro" id="IPR025281">
    <property type="entry name" value="DUF4074"/>
</dbReference>
<dbReference type="InterPro" id="IPR001356">
    <property type="entry name" value="HD"/>
</dbReference>
<dbReference type="InterPro" id="IPR020479">
    <property type="entry name" value="HD_metazoa"/>
</dbReference>
<dbReference type="InterPro" id="IPR001827">
    <property type="entry name" value="Homeobox_Antennapedia_CS"/>
</dbReference>
<dbReference type="InterPro" id="IPR017970">
    <property type="entry name" value="Homeobox_CS"/>
</dbReference>
<dbReference type="InterPro" id="IPR009057">
    <property type="entry name" value="Homeodomain-like_sf"/>
</dbReference>
<dbReference type="PANTHER" id="PTHR45664:SF5">
    <property type="entry name" value="HOMEOBOX PROTEIN HOX-D3"/>
    <property type="match status" value="1"/>
</dbReference>
<dbReference type="PANTHER" id="PTHR45664">
    <property type="entry name" value="PROTEIN ZERKNUELLT 1-RELATED"/>
    <property type="match status" value="1"/>
</dbReference>
<dbReference type="Pfam" id="PF13293">
    <property type="entry name" value="DUF4074"/>
    <property type="match status" value="1"/>
</dbReference>
<dbReference type="Pfam" id="PF00046">
    <property type="entry name" value="Homeodomain"/>
    <property type="match status" value="1"/>
</dbReference>
<dbReference type="PRINTS" id="PR00024">
    <property type="entry name" value="HOMEOBOX"/>
</dbReference>
<dbReference type="SMART" id="SM00389">
    <property type="entry name" value="HOX"/>
    <property type="match status" value="1"/>
</dbReference>
<dbReference type="SUPFAM" id="SSF46689">
    <property type="entry name" value="Homeodomain-like"/>
    <property type="match status" value="1"/>
</dbReference>
<dbReference type="PROSITE" id="PS00032">
    <property type="entry name" value="ANTENNAPEDIA"/>
    <property type="match status" value="1"/>
</dbReference>
<dbReference type="PROSITE" id="PS00027">
    <property type="entry name" value="HOMEOBOX_1"/>
    <property type="match status" value="1"/>
</dbReference>
<dbReference type="PROSITE" id="PS50071">
    <property type="entry name" value="HOMEOBOX_2"/>
    <property type="match status" value="1"/>
</dbReference>
<sequence length="433" mass="45976">MLFEQGQLTLELPECTMQKAAYYENPGLFGGYGYSKATDTYGYSTPHQPYPPPAAANSLDSDYPSSACSIQSSAPLRAPAHKGAELNGSCMRPGTGNSQGGGGGNQPPGLNSEQQPPQPPPPPPPTLPPSSPTNPGSGVPAKKTKGGLSASSSSSTISKQIFPWMKESRQNSKQKNSCATSGENCEDKSPPGPASKRVRTAYTSAQLVELEKEFHFNRYLCRPRRVEMANLLNLTERQIKIWFQNRRMKYKKDQKAKGILHSPAGQSPERSPPLGGAAGHVAYSGQLPPVPGLAYDAPSPPAFAKSQPNMYGLAAYTAPLSSCLPQQKRYPAPEFEPHPMASNGGGFASANLQGSPVYVGGNFVDSMAPTSGPVFNLGHLSHPSSASVDYSCAAQIPGNHHHGPCDPHPTYTDLSAHHSSQGRLPEAPKLTHL</sequence>
<gene>
    <name type="primary">Hoxd3</name>
    <name type="synonym">Hox-4.1</name>
    <name type="synonym">Hoxd-3</name>
</gene>